<proteinExistence type="evidence at transcript level"/>
<keyword id="KW-0963">Cytoplasm</keyword>
<keyword id="KW-1017">Isopeptide bond</keyword>
<keyword id="KW-0539">Nucleus</keyword>
<keyword id="KW-1185">Reference proteome</keyword>
<keyword id="KW-0677">Repeat</keyword>
<keyword id="KW-0832">Ubl conjugation</keyword>
<keyword id="KW-0833">Ubl conjugation pathway</keyword>
<reference key="1">
    <citation type="journal article" date="2005" name="Nature">
        <title>The map-based sequence of the rice genome.</title>
        <authorList>
            <consortium name="International rice genome sequencing project (IRGSP)"/>
        </authorList>
    </citation>
    <scope>NUCLEOTIDE SEQUENCE [LARGE SCALE GENOMIC DNA]</scope>
    <source>
        <strain>cv. Nipponbare</strain>
    </source>
</reference>
<reference key="2">
    <citation type="journal article" date="2013" name="Rice">
        <title>Improvement of the Oryza sativa Nipponbare reference genome using next generation sequence and optical map data.</title>
        <authorList>
            <person name="Kawahara Y."/>
            <person name="de la Bastide M."/>
            <person name="Hamilton J.P."/>
            <person name="Kanamori H."/>
            <person name="McCombie W.R."/>
            <person name="Ouyang S."/>
            <person name="Schwartz D.C."/>
            <person name="Tanaka T."/>
            <person name="Wu J."/>
            <person name="Zhou S."/>
            <person name="Childs K.L."/>
            <person name="Davidson R.M."/>
            <person name="Lin H."/>
            <person name="Quesada-Ocampo L."/>
            <person name="Vaillancourt B."/>
            <person name="Sakai H."/>
            <person name="Lee S.S."/>
            <person name="Kim J."/>
            <person name="Numa H."/>
            <person name="Itoh T."/>
            <person name="Buell C.R."/>
            <person name="Matsumoto T."/>
        </authorList>
    </citation>
    <scope>GENOME REANNOTATION</scope>
    <source>
        <strain>cv. Nipponbare</strain>
    </source>
</reference>
<reference key="3">
    <citation type="journal article" date="2003" name="Science">
        <title>Collection, mapping, and annotation of over 28,000 cDNA clones from japonica rice.</title>
        <authorList>
            <consortium name="The rice full-length cDNA consortium"/>
        </authorList>
    </citation>
    <scope>NUCLEOTIDE SEQUENCE [LARGE SCALE MRNA]</scope>
    <source>
        <strain>cv. Nipponbare</strain>
    </source>
</reference>
<protein>
    <recommendedName>
        <fullName>Ubiquitin-NEDD8-like protein RUB2</fullName>
    </recommendedName>
    <component>
        <recommendedName>
            <fullName>Ubiquitin</fullName>
        </recommendedName>
    </component>
    <component>
        <recommendedName>
            <fullName>NEDD8-like protein RUB2</fullName>
        </recommendedName>
        <alternativeName>
            <fullName>OsRUB2</fullName>
        </alternativeName>
        <alternativeName>
            <fullName>Ubiquitin-related protein 2</fullName>
        </alternativeName>
    </component>
</protein>
<name>RUB2_ORYSJ</name>
<gene>
    <name type="primary">RUB2</name>
    <name type="synonym">NEDD8</name>
    <name type="synonym">UBQ5</name>
    <name type="ordered locus">Os06g0650100</name>
    <name type="ordered locus">LOC_Os06g44080</name>
    <name type="ORF">P0453H04.18</name>
</gene>
<evidence type="ECO:0000250" key="1"/>
<evidence type="ECO:0000255" key="2">
    <source>
        <dbReference type="PROSITE-ProRule" id="PRU00214"/>
    </source>
</evidence>
<evidence type="ECO:0000305" key="3"/>
<comment type="function">
    <text evidence="1">Ubiquitin exists either covalently attached to another protein, or free (unanchored). When covalently bound, it is conjugated to target proteins via an isopeptide bond either as a monomer (monoubiquitin), a polymer linked via different Lys residues of the ubiquitin (polyubiquitin chains) or a linear polymer linked via the initiator Met of the ubiquitin (linear polyubiquitin chains). Polyubiquitin chains, when attached to a target protein, have different functions depending on the Lys residue of the ubiquitin that is linked: Lys-48-linked is involved in protein degradation via the proteasome; Lys-63-linked is involved in endocytosis, and DNA-damage responses. Linear polymer chains formed via attachment by the initiator Met lead to cell signaling. Ubiquitin is usually conjugated to Lys residues of target proteins, however, in rare cases, conjugation to Cys or Ser residues has been observed. When polyubiquitin is free (unanchored-polyubiquitin), it also has distinct roles, such as in activation of protein kinases, and in signaling (By similarity).</text>
</comment>
<comment type="function">
    <molecule>NEDD8-like protein RUB2</molecule>
    <text>Appears to function as a stable post-translational protein modifier.</text>
</comment>
<comment type="subcellular location">
    <molecule>Ubiquitin</molecule>
    <subcellularLocation>
        <location evidence="1">Cytoplasm</location>
    </subcellularLocation>
    <subcellularLocation>
        <location evidence="1">Nucleus</location>
    </subcellularLocation>
</comment>
<comment type="miscellaneous">
    <text>Ubiquitin is generally synthesized as a polyubiquitin precursor with tandem head to tail repeats. Often, there is one to three additional amino acids after the last repeat, removed in the mature protein. Alternatively, ubiquitin extension protein is synthesized as a single copy of ubiquitin fused to a ribosomal protein (either L40 or S27A) or to an ubiquitin-related protein (either RUB1 or RUB2). Following translation, extension protein is cleaved from ubiquitin.</text>
</comment>
<comment type="similarity">
    <text evidence="3">Belongs to the ubiquitin family.</text>
</comment>
<feature type="chain" id="PRO_0000396914" description="Ubiquitin">
    <location>
        <begin position="1"/>
        <end position="76"/>
    </location>
</feature>
<feature type="chain" id="PRO_0000035975" description="NEDD8-like protein RUB2">
    <location>
        <begin position="77"/>
        <end position="152"/>
    </location>
</feature>
<feature type="propeptide" id="PRO_0000035976" evidence="3">
    <location>
        <position position="153"/>
    </location>
</feature>
<feature type="domain" description="Ubiquitin-like 1" evidence="2">
    <location>
        <begin position="1"/>
        <end position="76"/>
    </location>
</feature>
<feature type="domain" description="Ubiquitin-like 2" evidence="2">
    <location>
        <begin position="77"/>
        <end position="152"/>
    </location>
</feature>
<feature type="cross-link" description="Glycyl lysine isopeptide (Lys-Gly) (interchain with G-Cter in ubiquitin)" evidence="1">
    <location>
        <position position="48"/>
    </location>
</feature>
<feature type="cross-link" description="Glycyl lysine isopeptide (Lys-Gly) (interchain with G-Cter in ubiquitin)" evidence="1">
    <location>
        <position position="63"/>
    </location>
</feature>
<feature type="cross-link" description="Glycyl lysine isopeptide (Gly-Lys) (interchain with K-? in acceptor proteins)" evidence="2">
    <location>
        <position position="76"/>
    </location>
</feature>
<feature type="cross-link" description="Glycyl lysine isopeptide (Gly-Lys) (interchain with K-? in acceptor proteins)" evidence="2">
    <location>
        <position position="152"/>
    </location>
</feature>
<accession>P0C031</accession>
<accession>B7E7D4</accession>
<accession>O82079</accession>
<accession>P03993</accession>
<accession>P69321</accession>
<accession>Q652Q2</accession>
<accession>Q67UR4</accession>
<accession>Q69P70</accession>
<accession>Q6ATC2</accession>
<accession>Q7XN78</accession>
<accession>Q8S5Y3</accession>
<accession>Q9AR09</accession>
<organism>
    <name type="scientific">Oryza sativa subsp. japonica</name>
    <name type="common">Rice</name>
    <dbReference type="NCBI Taxonomy" id="39947"/>
    <lineage>
        <taxon>Eukaryota</taxon>
        <taxon>Viridiplantae</taxon>
        <taxon>Streptophyta</taxon>
        <taxon>Embryophyta</taxon>
        <taxon>Tracheophyta</taxon>
        <taxon>Spermatophyta</taxon>
        <taxon>Magnoliopsida</taxon>
        <taxon>Liliopsida</taxon>
        <taxon>Poales</taxon>
        <taxon>Poaceae</taxon>
        <taxon>BOP clade</taxon>
        <taxon>Oryzoideae</taxon>
        <taxon>Oryzeae</taxon>
        <taxon>Oryzinae</taxon>
        <taxon>Oryza</taxon>
        <taxon>Oryza sativa</taxon>
    </lineage>
</organism>
<sequence length="153" mass="17095">MQIFVKTLTGKTITLEVESSDTIDNVKAKIQDKEGIPPDQQRLIFAGKQLEDGRTLADYNIQKESTLHLVLRLRGGTMIKVKTLTGKEIEIDIEPTDTIDRIKERVEEKEGIPPVQQRLIYAGKQLADDKTAKDYNIEGGSVLHLVLALRGGQ</sequence>
<dbReference type="EMBL" id="AP005453">
    <property type="protein sequence ID" value="BAD38105.1"/>
    <property type="molecule type" value="Genomic_DNA"/>
</dbReference>
<dbReference type="EMBL" id="AP014962">
    <property type="protein sequence ID" value="BAS98896.1"/>
    <property type="molecule type" value="Genomic_DNA"/>
</dbReference>
<dbReference type="EMBL" id="AK062354">
    <property type="protein sequence ID" value="BAG88281.1"/>
    <property type="molecule type" value="mRNA"/>
</dbReference>
<dbReference type="RefSeq" id="XP_015641274.1">
    <property type="nucleotide sequence ID" value="XM_015785788.1"/>
</dbReference>
<dbReference type="SMR" id="P0C031"/>
<dbReference type="FunCoup" id="P0C031">
    <property type="interactions" value="17"/>
</dbReference>
<dbReference type="STRING" id="39947.P0C031"/>
<dbReference type="PaxDb" id="39947-P0C031"/>
<dbReference type="EnsemblPlants" id="Os06t0650100-01">
    <property type="protein sequence ID" value="Os06t0650100-01"/>
    <property type="gene ID" value="Os06g0650100"/>
</dbReference>
<dbReference type="Gramene" id="Os06t0650100-01">
    <property type="protein sequence ID" value="Os06t0650100-01"/>
    <property type="gene ID" value="Os06g0650100"/>
</dbReference>
<dbReference type="eggNOG" id="KOG0001">
    <property type="taxonomic scope" value="Eukaryota"/>
</dbReference>
<dbReference type="HOGENOM" id="CLU_010412_0_0_1"/>
<dbReference type="InParanoid" id="P0C031"/>
<dbReference type="OMA" id="MSDEHTL"/>
<dbReference type="OrthoDB" id="1649877at2759"/>
<dbReference type="Proteomes" id="UP000000763">
    <property type="component" value="Chromosome 6"/>
</dbReference>
<dbReference type="Proteomes" id="UP000059680">
    <property type="component" value="Chromosome 6"/>
</dbReference>
<dbReference type="GO" id="GO:0005737">
    <property type="term" value="C:cytoplasm"/>
    <property type="evidence" value="ECO:0000318"/>
    <property type="project" value="GO_Central"/>
</dbReference>
<dbReference type="GO" id="GO:0005634">
    <property type="term" value="C:nucleus"/>
    <property type="evidence" value="ECO:0000318"/>
    <property type="project" value="GO_Central"/>
</dbReference>
<dbReference type="GO" id="GO:0003729">
    <property type="term" value="F:mRNA binding"/>
    <property type="evidence" value="ECO:0007669"/>
    <property type="project" value="UniProtKB-ARBA"/>
</dbReference>
<dbReference type="GO" id="GO:0031386">
    <property type="term" value="F:protein tag activity"/>
    <property type="evidence" value="ECO:0000318"/>
    <property type="project" value="GO_Central"/>
</dbReference>
<dbReference type="GO" id="GO:0031625">
    <property type="term" value="F:ubiquitin protein ligase binding"/>
    <property type="evidence" value="ECO:0000318"/>
    <property type="project" value="GO_Central"/>
</dbReference>
<dbReference type="GO" id="GO:0019941">
    <property type="term" value="P:modification-dependent protein catabolic process"/>
    <property type="evidence" value="ECO:0000318"/>
    <property type="project" value="GO_Central"/>
</dbReference>
<dbReference type="GO" id="GO:0016567">
    <property type="term" value="P:protein ubiquitination"/>
    <property type="evidence" value="ECO:0000318"/>
    <property type="project" value="GO_Central"/>
</dbReference>
<dbReference type="CDD" id="cd01806">
    <property type="entry name" value="Ubl_NEDD8"/>
    <property type="match status" value="1"/>
</dbReference>
<dbReference type="CDD" id="cd01803">
    <property type="entry name" value="Ubl_ubiquitin"/>
    <property type="match status" value="1"/>
</dbReference>
<dbReference type="FunFam" id="3.10.20.90:FF:000023">
    <property type="entry name" value="NEDD8 protein"/>
    <property type="match status" value="1"/>
</dbReference>
<dbReference type="FunFam" id="3.10.20.90:FF:000016">
    <property type="entry name" value="Polyubiquitin 3"/>
    <property type="match status" value="1"/>
</dbReference>
<dbReference type="Gene3D" id="3.10.20.90">
    <property type="entry name" value="Phosphatidylinositol 3-kinase Catalytic Subunit, Chain A, domain 1"/>
    <property type="match status" value="2"/>
</dbReference>
<dbReference type="InterPro" id="IPR038738">
    <property type="entry name" value="Nedd8-like"/>
</dbReference>
<dbReference type="InterPro" id="IPR000626">
    <property type="entry name" value="Ubiquitin-like_dom"/>
</dbReference>
<dbReference type="InterPro" id="IPR029071">
    <property type="entry name" value="Ubiquitin-like_domsf"/>
</dbReference>
<dbReference type="InterPro" id="IPR019954">
    <property type="entry name" value="Ubiquitin_CS"/>
</dbReference>
<dbReference type="InterPro" id="IPR019956">
    <property type="entry name" value="Ubiquitin_dom"/>
</dbReference>
<dbReference type="InterPro" id="IPR050158">
    <property type="entry name" value="Ubiquitin_ubiquitin-like"/>
</dbReference>
<dbReference type="PANTHER" id="PTHR10666">
    <property type="entry name" value="UBIQUITIN"/>
    <property type="match status" value="1"/>
</dbReference>
<dbReference type="Pfam" id="PF00240">
    <property type="entry name" value="ubiquitin"/>
    <property type="match status" value="2"/>
</dbReference>
<dbReference type="PRINTS" id="PR00348">
    <property type="entry name" value="UBIQUITIN"/>
</dbReference>
<dbReference type="SMART" id="SM00213">
    <property type="entry name" value="UBQ"/>
    <property type="match status" value="2"/>
</dbReference>
<dbReference type="SUPFAM" id="SSF54236">
    <property type="entry name" value="Ubiquitin-like"/>
    <property type="match status" value="2"/>
</dbReference>
<dbReference type="PROSITE" id="PS00299">
    <property type="entry name" value="UBIQUITIN_1"/>
    <property type="match status" value="2"/>
</dbReference>
<dbReference type="PROSITE" id="PS50053">
    <property type="entry name" value="UBIQUITIN_2"/>
    <property type="match status" value="2"/>
</dbReference>